<proteinExistence type="inferred from homology"/>
<comment type="function">
    <text evidence="1">DNA ligase that catalyzes the formation of phosphodiester linkages between 5'-phosphoryl and 3'-hydroxyl groups in double-stranded DNA using NAD as a coenzyme and as the energy source for the reaction. It is essential for DNA replication and repair of damaged DNA.</text>
</comment>
<comment type="catalytic activity">
    <reaction evidence="1">
        <text>NAD(+) + (deoxyribonucleotide)n-3'-hydroxyl + 5'-phospho-(deoxyribonucleotide)m = (deoxyribonucleotide)n+m + AMP + beta-nicotinamide D-nucleotide.</text>
        <dbReference type="EC" id="6.5.1.2"/>
    </reaction>
</comment>
<comment type="cofactor">
    <cofactor evidence="1">
        <name>Mg(2+)</name>
        <dbReference type="ChEBI" id="CHEBI:18420"/>
    </cofactor>
    <cofactor evidence="1">
        <name>Mn(2+)</name>
        <dbReference type="ChEBI" id="CHEBI:29035"/>
    </cofactor>
</comment>
<comment type="similarity">
    <text evidence="1">Belongs to the NAD-dependent DNA ligase family. LigA subfamily.</text>
</comment>
<evidence type="ECO:0000255" key="1">
    <source>
        <dbReference type="HAMAP-Rule" id="MF_01588"/>
    </source>
</evidence>
<name>DNLJ_BRUSU</name>
<dbReference type="EC" id="6.5.1.2" evidence="1"/>
<dbReference type="EMBL" id="AE014291">
    <property type="protein sequence ID" value="AAN30333.1"/>
    <property type="molecule type" value="Genomic_DNA"/>
</dbReference>
<dbReference type="EMBL" id="CP002997">
    <property type="protein sequence ID" value="AEM18749.1"/>
    <property type="molecule type" value="Genomic_DNA"/>
</dbReference>
<dbReference type="RefSeq" id="WP_002964528.1">
    <property type="nucleotide sequence ID" value="NZ_KN046804.1"/>
</dbReference>
<dbReference type="SMR" id="Q8FZQ3"/>
<dbReference type="GeneID" id="93016281"/>
<dbReference type="KEGG" id="bms:BR1420"/>
<dbReference type="KEGG" id="bsi:BS1330_I1414"/>
<dbReference type="PATRIC" id="fig|204722.22.peg.382"/>
<dbReference type="HOGENOM" id="CLU_007764_2_0_5"/>
<dbReference type="PhylomeDB" id="Q8FZQ3"/>
<dbReference type="Proteomes" id="UP000007104">
    <property type="component" value="Chromosome I"/>
</dbReference>
<dbReference type="GO" id="GO:0005829">
    <property type="term" value="C:cytosol"/>
    <property type="evidence" value="ECO:0007669"/>
    <property type="project" value="TreeGrafter"/>
</dbReference>
<dbReference type="GO" id="GO:0003911">
    <property type="term" value="F:DNA ligase (NAD+) activity"/>
    <property type="evidence" value="ECO:0007669"/>
    <property type="project" value="UniProtKB-UniRule"/>
</dbReference>
<dbReference type="GO" id="GO:0046872">
    <property type="term" value="F:metal ion binding"/>
    <property type="evidence" value="ECO:0007669"/>
    <property type="project" value="UniProtKB-KW"/>
</dbReference>
<dbReference type="GO" id="GO:0006281">
    <property type="term" value="P:DNA repair"/>
    <property type="evidence" value="ECO:0007669"/>
    <property type="project" value="UniProtKB-KW"/>
</dbReference>
<dbReference type="GO" id="GO:0006260">
    <property type="term" value="P:DNA replication"/>
    <property type="evidence" value="ECO:0007669"/>
    <property type="project" value="UniProtKB-KW"/>
</dbReference>
<dbReference type="CDD" id="cd17748">
    <property type="entry name" value="BRCT_DNA_ligase_like"/>
    <property type="match status" value="1"/>
</dbReference>
<dbReference type="CDD" id="cd00114">
    <property type="entry name" value="LIGANc"/>
    <property type="match status" value="1"/>
</dbReference>
<dbReference type="FunFam" id="3.30.470.30:FF:000001">
    <property type="entry name" value="DNA ligase"/>
    <property type="match status" value="1"/>
</dbReference>
<dbReference type="Gene3D" id="6.20.10.30">
    <property type="match status" value="1"/>
</dbReference>
<dbReference type="Gene3D" id="1.10.150.20">
    <property type="entry name" value="5' to 3' exonuclease, C-terminal subdomain"/>
    <property type="match status" value="2"/>
</dbReference>
<dbReference type="Gene3D" id="3.40.50.10190">
    <property type="entry name" value="BRCT domain"/>
    <property type="match status" value="1"/>
</dbReference>
<dbReference type="Gene3D" id="3.30.470.30">
    <property type="entry name" value="DNA ligase/mRNA capping enzyme"/>
    <property type="match status" value="1"/>
</dbReference>
<dbReference type="Gene3D" id="1.10.287.610">
    <property type="entry name" value="Helix hairpin bin"/>
    <property type="match status" value="1"/>
</dbReference>
<dbReference type="Gene3D" id="2.40.50.140">
    <property type="entry name" value="Nucleic acid-binding proteins"/>
    <property type="match status" value="1"/>
</dbReference>
<dbReference type="HAMAP" id="MF_01588">
    <property type="entry name" value="DNA_ligase_A"/>
    <property type="match status" value="1"/>
</dbReference>
<dbReference type="InterPro" id="IPR001357">
    <property type="entry name" value="BRCT_dom"/>
</dbReference>
<dbReference type="InterPro" id="IPR036420">
    <property type="entry name" value="BRCT_dom_sf"/>
</dbReference>
<dbReference type="InterPro" id="IPR041663">
    <property type="entry name" value="DisA/LigA_HHH"/>
</dbReference>
<dbReference type="InterPro" id="IPR001679">
    <property type="entry name" value="DNA_ligase"/>
</dbReference>
<dbReference type="InterPro" id="IPR018239">
    <property type="entry name" value="DNA_ligase_AS"/>
</dbReference>
<dbReference type="InterPro" id="IPR033136">
    <property type="entry name" value="DNA_ligase_CS"/>
</dbReference>
<dbReference type="InterPro" id="IPR013839">
    <property type="entry name" value="DNAligase_adenylation"/>
</dbReference>
<dbReference type="InterPro" id="IPR013840">
    <property type="entry name" value="DNAligase_N"/>
</dbReference>
<dbReference type="InterPro" id="IPR012340">
    <property type="entry name" value="NA-bd_OB-fold"/>
</dbReference>
<dbReference type="InterPro" id="IPR004150">
    <property type="entry name" value="NAD_DNA_ligase_OB"/>
</dbReference>
<dbReference type="InterPro" id="IPR010994">
    <property type="entry name" value="RuvA_2-like"/>
</dbReference>
<dbReference type="InterPro" id="IPR004149">
    <property type="entry name" value="Znf_DNAligase_C4"/>
</dbReference>
<dbReference type="NCBIfam" id="TIGR00575">
    <property type="entry name" value="dnlj"/>
    <property type="match status" value="1"/>
</dbReference>
<dbReference type="NCBIfam" id="NF005932">
    <property type="entry name" value="PRK07956.1"/>
    <property type="match status" value="1"/>
</dbReference>
<dbReference type="PANTHER" id="PTHR23389">
    <property type="entry name" value="CHROMOSOME TRANSMISSION FIDELITY FACTOR 18"/>
    <property type="match status" value="1"/>
</dbReference>
<dbReference type="PANTHER" id="PTHR23389:SF9">
    <property type="entry name" value="DNA LIGASE"/>
    <property type="match status" value="1"/>
</dbReference>
<dbReference type="Pfam" id="PF00533">
    <property type="entry name" value="BRCT"/>
    <property type="match status" value="1"/>
</dbReference>
<dbReference type="Pfam" id="PF01653">
    <property type="entry name" value="DNA_ligase_aden"/>
    <property type="match status" value="1"/>
</dbReference>
<dbReference type="Pfam" id="PF03120">
    <property type="entry name" value="DNA_ligase_OB"/>
    <property type="match status" value="1"/>
</dbReference>
<dbReference type="Pfam" id="PF03119">
    <property type="entry name" value="DNA_ligase_ZBD"/>
    <property type="match status" value="1"/>
</dbReference>
<dbReference type="Pfam" id="PF12826">
    <property type="entry name" value="HHH_2"/>
    <property type="match status" value="1"/>
</dbReference>
<dbReference type="PIRSF" id="PIRSF001604">
    <property type="entry name" value="LigA"/>
    <property type="match status" value="1"/>
</dbReference>
<dbReference type="SMART" id="SM00292">
    <property type="entry name" value="BRCT"/>
    <property type="match status" value="1"/>
</dbReference>
<dbReference type="SMART" id="SM00532">
    <property type="entry name" value="LIGANc"/>
    <property type="match status" value="1"/>
</dbReference>
<dbReference type="SUPFAM" id="SSF52113">
    <property type="entry name" value="BRCT domain"/>
    <property type="match status" value="1"/>
</dbReference>
<dbReference type="SUPFAM" id="SSF56091">
    <property type="entry name" value="DNA ligase/mRNA capping enzyme, catalytic domain"/>
    <property type="match status" value="1"/>
</dbReference>
<dbReference type="SUPFAM" id="SSF50249">
    <property type="entry name" value="Nucleic acid-binding proteins"/>
    <property type="match status" value="1"/>
</dbReference>
<dbReference type="SUPFAM" id="SSF47781">
    <property type="entry name" value="RuvA domain 2-like"/>
    <property type="match status" value="1"/>
</dbReference>
<dbReference type="PROSITE" id="PS50172">
    <property type="entry name" value="BRCT"/>
    <property type="match status" value="1"/>
</dbReference>
<dbReference type="PROSITE" id="PS01055">
    <property type="entry name" value="DNA_LIGASE_N1"/>
    <property type="match status" value="1"/>
</dbReference>
<dbReference type="PROSITE" id="PS01056">
    <property type="entry name" value="DNA_LIGASE_N2"/>
    <property type="match status" value="1"/>
</dbReference>
<organism>
    <name type="scientific">Brucella suis biovar 1 (strain 1330)</name>
    <dbReference type="NCBI Taxonomy" id="204722"/>
    <lineage>
        <taxon>Bacteria</taxon>
        <taxon>Pseudomonadati</taxon>
        <taxon>Pseudomonadota</taxon>
        <taxon>Alphaproteobacteria</taxon>
        <taxon>Hyphomicrobiales</taxon>
        <taxon>Brucellaceae</taxon>
        <taxon>Brucella/Ochrobactrum group</taxon>
        <taxon>Brucella</taxon>
    </lineage>
</organism>
<gene>
    <name evidence="1" type="primary">ligA</name>
    <name type="ordered locus">BR1420</name>
    <name type="ordered locus">BS1330_I1414</name>
</gene>
<accession>Q8FZQ3</accession>
<accession>G0KBI0</accession>
<keyword id="KW-0227">DNA damage</keyword>
<keyword id="KW-0234">DNA repair</keyword>
<keyword id="KW-0235">DNA replication</keyword>
<keyword id="KW-0436">Ligase</keyword>
<keyword id="KW-0460">Magnesium</keyword>
<keyword id="KW-0464">Manganese</keyword>
<keyword id="KW-0479">Metal-binding</keyword>
<keyword id="KW-0520">NAD</keyword>
<keyword id="KW-0862">Zinc</keyword>
<sequence length="719" mass="78681">MSDISVEKLTELEAAAELERLARAIAHHDELYHAKDRPEISDAAYDALKRRNEAIEAHFPALVRDDSPSRRVGAAPALATFAPVVHARPMLSLDNAFSDEDVRDFVGSVYRFLGQLPDDSIAFTAEPKIDGLSMSIRYENGILVSGATRGDGTTGENVTANIRTIAEIPNRLPAGAPAVVEVRGEVYMAKSDFLTLNAQMEAEGKQTYVNPRNTAAGSLRQLDAKVTASRKLRFFAYAWGEMSDMPADTQLGMVEVFRQWGFPVNPLMKRFNSVDGLLAHYRAIGMERPTLDYDIDGVVYKVDRLDLQTRLGFRSRSPRWAIAHKFPAEQALTILRGIDIQVGRTGALTPVARLEPITVGGVVVTNATLHNEDYIKGIGQKGEPIREGRDIRIGDSVIVQRAGDVIPQIVDVVLEEGKKRGEPYQFPHVCPACGSHAVREEGEAVRRCTGGLICPAQAVERIRHFVSRNAFDIEGLGEKQVEFFFNAEDPALCIRSPADIFTLKKRQENSLTKLQNIEGFGATSVKKLYDAIDARREIALHRFLFGLGIRHVGEVNAKRLARAYLSYAAFEKAALEAVPPKEGDRTDKGSEAWQDMLAVEGIGSIVAEAVVDFYGEPHNREVLAALLAEVTPLDEEARVATGSPVEGKTVVFTGSLERMSRDEAKAMAERHGAKTAGSVSKKTDLVVAGPGAGSKLAKATELGIEVINEDDWFKLVGED</sequence>
<protein>
    <recommendedName>
        <fullName evidence="1">DNA ligase</fullName>
        <ecNumber evidence="1">6.5.1.2</ecNumber>
    </recommendedName>
    <alternativeName>
        <fullName evidence="1">Polydeoxyribonucleotide synthase [NAD(+)]</fullName>
    </alternativeName>
</protein>
<feature type="chain" id="PRO_0000313156" description="DNA ligase">
    <location>
        <begin position="1"/>
        <end position="719"/>
    </location>
</feature>
<feature type="domain" description="BRCT" evidence="1">
    <location>
        <begin position="640"/>
        <end position="719"/>
    </location>
</feature>
<feature type="active site" description="N6-AMP-lysine intermediate" evidence="1">
    <location>
        <position position="128"/>
    </location>
</feature>
<feature type="binding site" evidence="1">
    <location>
        <begin position="42"/>
        <end position="46"/>
    </location>
    <ligand>
        <name>NAD(+)</name>
        <dbReference type="ChEBI" id="CHEBI:57540"/>
    </ligand>
</feature>
<feature type="binding site" evidence="1">
    <location>
        <begin position="92"/>
        <end position="93"/>
    </location>
    <ligand>
        <name>NAD(+)</name>
        <dbReference type="ChEBI" id="CHEBI:57540"/>
    </ligand>
</feature>
<feature type="binding site" evidence="1">
    <location>
        <position position="126"/>
    </location>
    <ligand>
        <name>NAD(+)</name>
        <dbReference type="ChEBI" id="CHEBI:57540"/>
    </ligand>
</feature>
<feature type="binding site" evidence="1">
    <location>
        <position position="149"/>
    </location>
    <ligand>
        <name>NAD(+)</name>
        <dbReference type="ChEBI" id="CHEBI:57540"/>
    </ligand>
</feature>
<feature type="binding site" evidence="1">
    <location>
        <position position="185"/>
    </location>
    <ligand>
        <name>NAD(+)</name>
        <dbReference type="ChEBI" id="CHEBI:57540"/>
    </ligand>
</feature>
<feature type="binding site" evidence="1">
    <location>
        <position position="301"/>
    </location>
    <ligand>
        <name>NAD(+)</name>
        <dbReference type="ChEBI" id="CHEBI:57540"/>
    </ligand>
</feature>
<feature type="binding site" evidence="1">
    <location>
        <position position="325"/>
    </location>
    <ligand>
        <name>NAD(+)</name>
        <dbReference type="ChEBI" id="CHEBI:57540"/>
    </ligand>
</feature>
<feature type="binding site" evidence="1">
    <location>
        <position position="430"/>
    </location>
    <ligand>
        <name>Zn(2+)</name>
        <dbReference type="ChEBI" id="CHEBI:29105"/>
    </ligand>
</feature>
<feature type="binding site" evidence="1">
    <location>
        <position position="433"/>
    </location>
    <ligand>
        <name>Zn(2+)</name>
        <dbReference type="ChEBI" id="CHEBI:29105"/>
    </ligand>
</feature>
<feature type="binding site" evidence="1">
    <location>
        <position position="448"/>
    </location>
    <ligand>
        <name>Zn(2+)</name>
        <dbReference type="ChEBI" id="CHEBI:29105"/>
    </ligand>
</feature>
<feature type="binding site" evidence="1">
    <location>
        <position position="454"/>
    </location>
    <ligand>
        <name>Zn(2+)</name>
        <dbReference type="ChEBI" id="CHEBI:29105"/>
    </ligand>
</feature>
<reference key="1">
    <citation type="journal article" date="2002" name="Proc. Natl. Acad. Sci. U.S.A.">
        <title>The Brucella suis genome reveals fundamental similarities between animal and plant pathogens and symbionts.</title>
        <authorList>
            <person name="Paulsen I.T."/>
            <person name="Seshadri R."/>
            <person name="Nelson K.E."/>
            <person name="Eisen J.A."/>
            <person name="Heidelberg J.F."/>
            <person name="Read T.D."/>
            <person name="Dodson R.J."/>
            <person name="Umayam L.A."/>
            <person name="Brinkac L.M."/>
            <person name="Beanan M.J."/>
            <person name="Daugherty S.C."/>
            <person name="DeBoy R.T."/>
            <person name="Durkin A.S."/>
            <person name="Kolonay J.F."/>
            <person name="Madupu R."/>
            <person name="Nelson W.C."/>
            <person name="Ayodeji B."/>
            <person name="Kraul M."/>
            <person name="Shetty J."/>
            <person name="Malek J.A."/>
            <person name="Van Aken S.E."/>
            <person name="Riedmuller S."/>
            <person name="Tettelin H."/>
            <person name="Gill S.R."/>
            <person name="White O."/>
            <person name="Salzberg S.L."/>
            <person name="Hoover D.L."/>
            <person name="Lindler L.E."/>
            <person name="Halling S.M."/>
            <person name="Boyle S.M."/>
            <person name="Fraser C.M."/>
        </authorList>
    </citation>
    <scope>NUCLEOTIDE SEQUENCE [LARGE SCALE GENOMIC DNA]</scope>
    <source>
        <strain>1330</strain>
    </source>
</reference>
<reference key="2">
    <citation type="journal article" date="2011" name="J. Bacteriol.">
        <title>Revised genome sequence of Brucella suis 1330.</title>
        <authorList>
            <person name="Tae H."/>
            <person name="Shallom S."/>
            <person name="Settlage R."/>
            <person name="Preston D."/>
            <person name="Adams L.G."/>
            <person name="Garner H.R."/>
        </authorList>
    </citation>
    <scope>NUCLEOTIDE SEQUENCE [LARGE SCALE GENOMIC DNA]</scope>
    <source>
        <strain>1330</strain>
    </source>
</reference>